<sequence>MDIVKSIDTSVDAVLDEFDCAYFAVTLKVEFKTGKQLVCIGFGDTLLEAKDKAYAKLGLSIIEEVNSHTVV</sequence>
<reference key="1">
    <citation type="journal article" date="1992" name="J. Gen. Virol.">
        <title>Analysis of a 9.6 kb sequence from the 3' end of canine coronavirus genomic RNA.</title>
        <authorList>
            <person name="Horsburgh B.C."/>
            <person name="Brierley I."/>
            <person name="Brown T.D.K."/>
        </authorList>
    </citation>
    <scope>NUCLEOTIDE SEQUENCE [GENOMIC RNA]</scope>
</reference>
<accession>Q65982</accession>
<gene>
    <name type="ORF">3a</name>
</gene>
<organismHost>
    <name type="scientific">Canis lupus familiaris</name>
    <name type="common">Dog</name>
    <name type="synonym">Canis familiaris</name>
    <dbReference type="NCBI Taxonomy" id="9615"/>
</organismHost>
<name>NS3A_CVCAI</name>
<dbReference type="EMBL" id="D13096">
    <property type="protein sequence ID" value="BAA02409.1"/>
    <property type="molecule type" value="Genomic_RNA"/>
</dbReference>
<dbReference type="PIR" id="JQ1720">
    <property type="entry name" value="JQ1720"/>
</dbReference>
<dbReference type="SMR" id="Q65982"/>
<dbReference type="InterPro" id="IPR006784">
    <property type="entry name" value="Coronavirus_Orf3"/>
</dbReference>
<dbReference type="Pfam" id="PF04694">
    <property type="entry name" value="Corona_3"/>
    <property type="match status" value="1"/>
</dbReference>
<feature type="chain" id="PRO_0000283981" description="Non-structural protein 3a">
    <location>
        <begin position="1"/>
        <end position="71"/>
    </location>
</feature>
<protein>
    <recommendedName>
        <fullName>Non-structural protein 3a</fullName>
        <shortName>ns3a</shortName>
    </recommendedName>
    <alternativeName>
        <fullName>Accessory protein 3a</fullName>
    </alternativeName>
</protein>
<proteinExistence type="predicted"/>
<organism>
    <name type="scientific">Canine coronavirus (strain Insavc-1)</name>
    <name type="common">CCoV</name>
    <name type="synonym">Canine enteric coronavirus</name>
    <dbReference type="NCBI Taxonomy" id="36391"/>
    <lineage>
        <taxon>Viruses</taxon>
        <taxon>Riboviria</taxon>
        <taxon>Orthornavirae</taxon>
        <taxon>Pisuviricota</taxon>
        <taxon>Pisoniviricetes</taxon>
        <taxon>Nidovirales</taxon>
        <taxon>Cornidovirineae</taxon>
        <taxon>Coronaviridae</taxon>
        <taxon>Orthocoronavirinae</taxon>
        <taxon>Alphacoronavirus</taxon>
        <taxon>Tegacovirus</taxon>
        <taxon>Alphacoronavirus 1</taxon>
    </lineage>
</organism>